<reference key="1">
    <citation type="journal article" date="2005" name="Science">
        <title>The transcriptional landscape of the mammalian genome.</title>
        <authorList>
            <person name="Carninci P."/>
            <person name="Kasukawa T."/>
            <person name="Katayama S."/>
            <person name="Gough J."/>
            <person name="Frith M.C."/>
            <person name="Maeda N."/>
            <person name="Oyama R."/>
            <person name="Ravasi T."/>
            <person name="Lenhard B."/>
            <person name="Wells C."/>
            <person name="Kodzius R."/>
            <person name="Shimokawa K."/>
            <person name="Bajic V.B."/>
            <person name="Brenner S.E."/>
            <person name="Batalov S."/>
            <person name="Forrest A.R."/>
            <person name="Zavolan M."/>
            <person name="Davis M.J."/>
            <person name="Wilming L.G."/>
            <person name="Aidinis V."/>
            <person name="Allen J.E."/>
            <person name="Ambesi-Impiombato A."/>
            <person name="Apweiler R."/>
            <person name="Aturaliya R.N."/>
            <person name="Bailey T.L."/>
            <person name="Bansal M."/>
            <person name="Baxter L."/>
            <person name="Beisel K.W."/>
            <person name="Bersano T."/>
            <person name="Bono H."/>
            <person name="Chalk A.M."/>
            <person name="Chiu K.P."/>
            <person name="Choudhary V."/>
            <person name="Christoffels A."/>
            <person name="Clutterbuck D.R."/>
            <person name="Crowe M.L."/>
            <person name="Dalla E."/>
            <person name="Dalrymple B.P."/>
            <person name="de Bono B."/>
            <person name="Della Gatta G."/>
            <person name="di Bernardo D."/>
            <person name="Down T."/>
            <person name="Engstrom P."/>
            <person name="Fagiolini M."/>
            <person name="Faulkner G."/>
            <person name="Fletcher C.F."/>
            <person name="Fukushima T."/>
            <person name="Furuno M."/>
            <person name="Futaki S."/>
            <person name="Gariboldi M."/>
            <person name="Georgii-Hemming P."/>
            <person name="Gingeras T.R."/>
            <person name="Gojobori T."/>
            <person name="Green R.E."/>
            <person name="Gustincich S."/>
            <person name="Harbers M."/>
            <person name="Hayashi Y."/>
            <person name="Hensch T.K."/>
            <person name="Hirokawa N."/>
            <person name="Hill D."/>
            <person name="Huminiecki L."/>
            <person name="Iacono M."/>
            <person name="Ikeo K."/>
            <person name="Iwama A."/>
            <person name="Ishikawa T."/>
            <person name="Jakt M."/>
            <person name="Kanapin A."/>
            <person name="Katoh M."/>
            <person name="Kawasawa Y."/>
            <person name="Kelso J."/>
            <person name="Kitamura H."/>
            <person name="Kitano H."/>
            <person name="Kollias G."/>
            <person name="Krishnan S.P."/>
            <person name="Kruger A."/>
            <person name="Kummerfeld S.K."/>
            <person name="Kurochkin I.V."/>
            <person name="Lareau L.F."/>
            <person name="Lazarevic D."/>
            <person name="Lipovich L."/>
            <person name="Liu J."/>
            <person name="Liuni S."/>
            <person name="McWilliam S."/>
            <person name="Madan Babu M."/>
            <person name="Madera M."/>
            <person name="Marchionni L."/>
            <person name="Matsuda H."/>
            <person name="Matsuzawa S."/>
            <person name="Miki H."/>
            <person name="Mignone F."/>
            <person name="Miyake S."/>
            <person name="Morris K."/>
            <person name="Mottagui-Tabar S."/>
            <person name="Mulder N."/>
            <person name="Nakano N."/>
            <person name="Nakauchi H."/>
            <person name="Ng P."/>
            <person name="Nilsson R."/>
            <person name="Nishiguchi S."/>
            <person name="Nishikawa S."/>
            <person name="Nori F."/>
            <person name="Ohara O."/>
            <person name="Okazaki Y."/>
            <person name="Orlando V."/>
            <person name="Pang K.C."/>
            <person name="Pavan W.J."/>
            <person name="Pavesi G."/>
            <person name="Pesole G."/>
            <person name="Petrovsky N."/>
            <person name="Piazza S."/>
            <person name="Reed J."/>
            <person name="Reid J.F."/>
            <person name="Ring B.Z."/>
            <person name="Ringwald M."/>
            <person name="Rost B."/>
            <person name="Ruan Y."/>
            <person name="Salzberg S.L."/>
            <person name="Sandelin A."/>
            <person name="Schneider C."/>
            <person name="Schoenbach C."/>
            <person name="Sekiguchi K."/>
            <person name="Semple C.A."/>
            <person name="Seno S."/>
            <person name="Sessa L."/>
            <person name="Sheng Y."/>
            <person name="Shibata Y."/>
            <person name="Shimada H."/>
            <person name="Shimada K."/>
            <person name="Silva D."/>
            <person name="Sinclair B."/>
            <person name="Sperling S."/>
            <person name="Stupka E."/>
            <person name="Sugiura K."/>
            <person name="Sultana R."/>
            <person name="Takenaka Y."/>
            <person name="Taki K."/>
            <person name="Tammoja K."/>
            <person name="Tan S.L."/>
            <person name="Tang S."/>
            <person name="Taylor M.S."/>
            <person name="Tegner J."/>
            <person name="Teichmann S.A."/>
            <person name="Ueda H.R."/>
            <person name="van Nimwegen E."/>
            <person name="Verardo R."/>
            <person name="Wei C.L."/>
            <person name="Yagi K."/>
            <person name="Yamanishi H."/>
            <person name="Zabarovsky E."/>
            <person name="Zhu S."/>
            <person name="Zimmer A."/>
            <person name="Hide W."/>
            <person name="Bult C."/>
            <person name="Grimmond S.M."/>
            <person name="Teasdale R.D."/>
            <person name="Liu E.T."/>
            <person name="Brusic V."/>
            <person name="Quackenbush J."/>
            <person name="Wahlestedt C."/>
            <person name="Mattick J.S."/>
            <person name="Hume D.A."/>
            <person name="Kai C."/>
            <person name="Sasaki D."/>
            <person name="Tomaru Y."/>
            <person name="Fukuda S."/>
            <person name="Kanamori-Katayama M."/>
            <person name="Suzuki M."/>
            <person name="Aoki J."/>
            <person name="Arakawa T."/>
            <person name="Iida J."/>
            <person name="Imamura K."/>
            <person name="Itoh M."/>
            <person name="Kato T."/>
            <person name="Kawaji H."/>
            <person name="Kawagashira N."/>
            <person name="Kawashima T."/>
            <person name="Kojima M."/>
            <person name="Kondo S."/>
            <person name="Konno H."/>
            <person name="Nakano K."/>
            <person name="Ninomiya N."/>
            <person name="Nishio T."/>
            <person name="Okada M."/>
            <person name="Plessy C."/>
            <person name="Shibata K."/>
            <person name="Shiraki T."/>
            <person name="Suzuki S."/>
            <person name="Tagami M."/>
            <person name="Waki K."/>
            <person name="Watahiki A."/>
            <person name="Okamura-Oho Y."/>
            <person name="Suzuki H."/>
            <person name="Kawai J."/>
            <person name="Hayashizaki Y."/>
        </authorList>
    </citation>
    <scope>NUCLEOTIDE SEQUENCE [LARGE SCALE MRNA]</scope>
    <source>
        <strain>C57BL/6J</strain>
        <tissue>Embryonic stem cell</tissue>
        <tissue>Testis</tissue>
    </source>
</reference>
<reference key="2">
    <citation type="journal article" date="2004" name="Genome Res.">
        <title>The status, quality, and expansion of the NIH full-length cDNA project: the Mammalian Gene Collection (MGC).</title>
        <authorList>
            <consortium name="The MGC Project Team"/>
        </authorList>
    </citation>
    <scope>NUCLEOTIDE SEQUENCE [LARGE SCALE MRNA]</scope>
    <source>
        <tissue>Colon</tissue>
        <tissue>Embryo</tissue>
    </source>
</reference>
<reference key="3">
    <citation type="submission" date="2005-11" db="PDB data bank">
        <title>Solution structure of RSGI RUH-035, a Zn-ribbon module in mouse cDNA.</title>
        <authorList>
            <consortium name="RIKEN structural genomics initiative (RSGI)"/>
        </authorList>
    </citation>
    <scope>STRUCTURE BY NMR OF 251-316 IN COMPLEX WITH ZINC IONS</scope>
</reference>
<protein>
    <recommendedName>
        <fullName>RNA-binding protein NOB1</fullName>
        <ecNumber evidence="1">3.1.-.-</ecNumber>
    </recommendedName>
</protein>
<comment type="function">
    <text evidence="1 2">May play a role in mRNA degradation (By similarity). Endonuclease required for processing of 20S pre-rRNA precursor and biogenesis of 40S ribosomal subunits (By similarity).</text>
</comment>
<comment type="subunit">
    <text evidence="1 7">May interact with UPF2 (Probable). Component of the small ribosomal subunit, ribosomal RNA processing complex (SSU RRP complex) (By similarity).</text>
</comment>
<comment type="subcellular location">
    <subcellularLocation>
        <location evidence="2">Nucleus</location>
    </subcellularLocation>
</comment>
<comment type="similarity">
    <text evidence="6">Belongs to the NOB1 family.</text>
</comment>
<evidence type="ECO:0000250" key="1">
    <source>
        <dbReference type="UniProtKB" id="Q9FLL1"/>
    </source>
</evidence>
<evidence type="ECO:0000250" key="2">
    <source>
        <dbReference type="UniProtKB" id="Q9ULX3"/>
    </source>
</evidence>
<evidence type="ECO:0000255" key="3"/>
<evidence type="ECO:0000256" key="4">
    <source>
        <dbReference type="SAM" id="MobiDB-lite"/>
    </source>
</evidence>
<evidence type="ECO:0000269" key="5">
    <source ref="3"/>
</evidence>
<evidence type="ECO:0000305" key="6"/>
<evidence type="ECO:0000305" key="7">
    <source ref="3"/>
</evidence>
<evidence type="ECO:0007744" key="8">
    <source>
        <dbReference type="PDB" id="2CON"/>
    </source>
</evidence>
<evidence type="ECO:0007829" key="9">
    <source>
        <dbReference type="PDB" id="2CON"/>
    </source>
</evidence>
<proteinExistence type="evidence at protein level"/>
<name>NOB1_MOUSE</name>
<keyword id="KW-0002">3D-structure</keyword>
<keyword id="KW-0255">Endonuclease</keyword>
<keyword id="KW-0378">Hydrolase</keyword>
<keyword id="KW-0479">Metal-binding</keyword>
<keyword id="KW-0540">Nuclease</keyword>
<keyword id="KW-0539">Nucleus</keyword>
<keyword id="KW-0597">Phosphoprotein</keyword>
<keyword id="KW-1185">Reference proteome</keyword>
<keyword id="KW-0862">Zinc</keyword>
<keyword id="KW-0863">Zinc-finger</keyword>
<accession>Q8BW10</accession>
<accession>Q7TPR3</accession>
<accession>Q9CRD7</accession>
<dbReference type="EC" id="3.1.-.-" evidence="1"/>
<dbReference type="EMBL" id="AK075755">
    <property type="protein sequence ID" value="BAC35933.1"/>
    <property type="molecule type" value="mRNA"/>
</dbReference>
<dbReference type="EMBL" id="AK021194">
    <property type="protein sequence ID" value="BAB32325.1"/>
    <property type="molecule type" value="mRNA"/>
</dbReference>
<dbReference type="EMBL" id="BC054835">
    <property type="protein sequence ID" value="AAH54835.1"/>
    <property type="molecule type" value="mRNA"/>
</dbReference>
<dbReference type="EMBL" id="BC103793">
    <property type="protein sequence ID" value="AAI03794.1"/>
    <property type="molecule type" value="mRNA"/>
</dbReference>
<dbReference type="CCDS" id="CCDS22649.1"/>
<dbReference type="RefSeq" id="NP_080553.1">
    <property type="nucleotide sequence ID" value="NM_026277.3"/>
</dbReference>
<dbReference type="PDB" id="2CON">
    <property type="method" value="NMR"/>
    <property type="chains" value="A=251-316"/>
</dbReference>
<dbReference type="PDBsum" id="2CON"/>
<dbReference type="SMR" id="Q8BW10"/>
<dbReference type="BioGRID" id="212314">
    <property type="interactions" value="6"/>
</dbReference>
<dbReference type="FunCoup" id="Q8BW10">
    <property type="interactions" value="3580"/>
</dbReference>
<dbReference type="IntAct" id="Q8BW10">
    <property type="interactions" value="2"/>
</dbReference>
<dbReference type="STRING" id="10090.ENSMUSP00000003946"/>
<dbReference type="iPTMnet" id="Q8BW10"/>
<dbReference type="PhosphoSitePlus" id="Q8BW10"/>
<dbReference type="jPOST" id="Q8BW10"/>
<dbReference type="PaxDb" id="10090-ENSMUSP00000003946"/>
<dbReference type="ProteomicsDB" id="252838"/>
<dbReference type="Pumba" id="Q8BW10"/>
<dbReference type="Antibodypedia" id="29888">
    <property type="antibodies" value="261 antibodies from 26 providers"/>
</dbReference>
<dbReference type="DNASU" id="67619"/>
<dbReference type="Ensembl" id="ENSMUST00000003946.9">
    <property type="protein sequence ID" value="ENSMUSP00000003946.9"/>
    <property type="gene ID" value="ENSMUSG00000003848.15"/>
</dbReference>
<dbReference type="GeneID" id="67619"/>
<dbReference type="KEGG" id="mmu:67619"/>
<dbReference type="UCSC" id="uc009nhr.1">
    <property type="organism name" value="mouse"/>
</dbReference>
<dbReference type="AGR" id="MGI:1914869"/>
<dbReference type="CTD" id="28987"/>
<dbReference type="MGI" id="MGI:1914869">
    <property type="gene designation" value="Nob1"/>
</dbReference>
<dbReference type="VEuPathDB" id="HostDB:ENSMUSG00000003848"/>
<dbReference type="eggNOG" id="KOG2463">
    <property type="taxonomic scope" value="Eukaryota"/>
</dbReference>
<dbReference type="GeneTree" id="ENSGT00390000015857"/>
<dbReference type="HOGENOM" id="CLU_024666_0_0_1"/>
<dbReference type="InParanoid" id="Q8BW10"/>
<dbReference type="OMA" id="GYELECE"/>
<dbReference type="OrthoDB" id="446759at2759"/>
<dbReference type="PhylomeDB" id="Q8BW10"/>
<dbReference type="TreeFam" id="TF105838"/>
<dbReference type="Reactome" id="R-MMU-6791226">
    <property type="pathway name" value="Major pathway of rRNA processing in the nucleolus and cytosol"/>
</dbReference>
<dbReference type="BioGRID-ORCS" id="67619">
    <property type="hits" value="25 hits in 82 CRISPR screens"/>
</dbReference>
<dbReference type="ChiTaRS" id="Nob1">
    <property type="organism name" value="mouse"/>
</dbReference>
<dbReference type="EvolutionaryTrace" id="Q8BW10"/>
<dbReference type="PRO" id="PR:Q8BW10"/>
<dbReference type="Proteomes" id="UP000000589">
    <property type="component" value="Chromosome 8"/>
</dbReference>
<dbReference type="RNAct" id="Q8BW10">
    <property type="molecule type" value="protein"/>
</dbReference>
<dbReference type="Bgee" id="ENSMUSG00000003848">
    <property type="expression patterns" value="Expressed in manus and 237 other cell types or tissues"/>
</dbReference>
<dbReference type="ExpressionAtlas" id="Q8BW10">
    <property type="expression patterns" value="baseline and differential"/>
</dbReference>
<dbReference type="GO" id="GO:0005737">
    <property type="term" value="C:cytoplasm"/>
    <property type="evidence" value="ECO:0000247"/>
    <property type="project" value="MGI"/>
</dbReference>
<dbReference type="GO" id="GO:0005730">
    <property type="term" value="C:nucleolus"/>
    <property type="evidence" value="ECO:0000247"/>
    <property type="project" value="MGI"/>
</dbReference>
<dbReference type="GO" id="GO:0005634">
    <property type="term" value="C:nucleus"/>
    <property type="evidence" value="ECO:0000247"/>
    <property type="project" value="MGI"/>
</dbReference>
<dbReference type="GO" id="GO:0004521">
    <property type="term" value="F:RNA endonuclease activity"/>
    <property type="evidence" value="ECO:0007669"/>
    <property type="project" value="InterPro"/>
</dbReference>
<dbReference type="GO" id="GO:0008270">
    <property type="term" value="F:zinc ion binding"/>
    <property type="evidence" value="ECO:0007669"/>
    <property type="project" value="UniProtKB-KW"/>
</dbReference>
<dbReference type="GO" id="GO:0030490">
    <property type="term" value="P:maturation of SSU-rRNA"/>
    <property type="evidence" value="ECO:0000247"/>
    <property type="project" value="MGI"/>
</dbReference>
<dbReference type="GO" id="GO:0042274">
    <property type="term" value="P:ribosomal small subunit biogenesis"/>
    <property type="evidence" value="ECO:0000247"/>
    <property type="project" value="MGI"/>
</dbReference>
<dbReference type="GO" id="GO:0007601">
    <property type="term" value="P:visual perception"/>
    <property type="evidence" value="ECO:0000315"/>
    <property type="project" value="MGI"/>
</dbReference>
<dbReference type="CDD" id="cd09876">
    <property type="entry name" value="PIN_Nob1-like"/>
    <property type="match status" value="1"/>
</dbReference>
<dbReference type="FunFam" id="3.40.50.1010:FF:000018">
    <property type="entry name" value="RNA-binding protein NOB1"/>
    <property type="match status" value="1"/>
</dbReference>
<dbReference type="Gene3D" id="3.40.50.1010">
    <property type="entry name" value="5'-nuclease"/>
    <property type="match status" value="1"/>
</dbReference>
<dbReference type="Gene3D" id="6.20.210.10">
    <property type="entry name" value="Nin one binding (NOB1), Zn-ribbon-like"/>
    <property type="match status" value="1"/>
</dbReference>
<dbReference type="InterPro" id="IPR039907">
    <property type="entry name" value="NOB1"/>
</dbReference>
<dbReference type="InterPro" id="IPR017117">
    <property type="entry name" value="Nob1_euk"/>
</dbReference>
<dbReference type="InterPro" id="IPR036283">
    <property type="entry name" value="NOB1_Zf-like_sf"/>
</dbReference>
<dbReference type="InterPro" id="IPR014881">
    <property type="entry name" value="NOB1_Zn-bd"/>
</dbReference>
<dbReference type="InterPro" id="IPR002716">
    <property type="entry name" value="PIN_dom"/>
</dbReference>
<dbReference type="InterPro" id="IPR033411">
    <property type="entry name" value="Ribonuclease_PIN"/>
</dbReference>
<dbReference type="InterPro" id="IPR033461">
    <property type="entry name" value="WRNPLPNID"/>
</dbReference>
<dbReference type="PANTHER" id="PTHR12814">
    <property type="entry name" value="RNA-BINDING PROTEIN NOB1"/>
    <property type="match status" value="1"/>
</dbReference>
<dbReference type="PANTHER" id="PTHR12814:SF2">
    <property type="entry name" value="RNA-BINDING PROTEIN NOB1"/>
    <property type="match status" value="1"/>
</dbReference>
<dbReference type="Pfam" id="PF17146">
    <property type="entry name" value="PIN_6"/>
    <property type="match status" value="1"/>
</dbReference>
<dbReference type="Pfam" id="PF15017">
    <property type="entry name" value="WRNPLPNID"/>
    <property type="match status" value="1"/>
</dbReference>
<dbReference type="Pfam" id="PF08772">
    <property type="entry name" value="Zn_ribbon_NOB1"/>
    <property type="match status" value="1"/>
</dbReference>
<dbReference type="PIRSF" id="PIRSF037125">
    <property type="entry name" value="D-site_20S_pre-rRNA_nuclease"/>
    <property type="match status" value="1"/>
</dbReference>
<dbReference type="SMART" id="SM00670">
    <property type="entry name" value="PINc"/>
    <property type="match status" value="1"/>
</dbReference>
<dbReference type="SUPFAM" id="SSF144206">
    <property type="entry name" value="NOB1 zinc finger-like"/>
    <property type="match status" value="1"/>
</dbReference>
<gene>
    <name type="primary">Nob1</name>
</gene>
<organism>
    <name type="scientific">Mus musculus</name>
    <name type="common">Mouse</name>
    <dbReference type="NCBI Taxonomy" id="10090"/>
    <lineage>
        <taxon>Eukaryota</taxon>
        <taxon>Metazoa</taxon>
        <taxon>Chordata</taxon>
        <taxon>Craniata</taxon>
        <taxon>Vertebrata</taxon>
        <taxon>Euteleostomi</taxon>
        <taxon>Mammalia</taxon>
        <taxon>Eutheria</taxon>
        <taxon>Euarchontoglires</taxon>
        <taxon>Glires</taxon>
        <taxon>Rodentia</taxon>
        <taxon>Myomorpha</taxon>
        <taxon>Muroidea</taxon>
        <taxon>Muridae</taxon>
        <taxon>Murinae</taxon>
        <taxon>Mus</taxon>
        <taxon>Mus</taxon>
    </lineage>
</organism>
<sequence length="403" mass="45464">MAPVEHVVADAGAFLRDAPLQDIGKNIYTIREVVREIRDKATRRRLAVLPYQLRFKEPLPEYVRLVTEFSKKTGDYPSLSATDIQVLALTYQLEAEFVGVSHLKKEPEKAKVSSSIQHPETALHISGFHLPSKSKPLQEAVDRGHAADGPENLEFSSFMFWRTPLPNIDRELQELLIDGREEEEEEEECEDSDDDGGGWITPSNIKQIQQELEQCDTPEDVQVGCVTTDFAMQNVLLQMGLHVLAVNGMLVREARSYILRCHGCFKTTSDMNRVFCGHCGNKTLKKVSVTINDDGTLHMHFSRNPKVLNPRGLRYSLPTPKGGKYAINPHLTEDQRFPQLRLSQKARQKTDVFAPDYIAGVSPFAENDISSRSAILQVRDGMLGAGRRRLNPNASRKKFVKKR</sequence>
<feature type="chain" id="PRO_0000233267" description="RNA-binding protein NOB1">
    <location>
        <begin position="1"/>
        <end position="403"/>
    </location>
</feature>
<feature type="domain" description="PINc" evidence="3">
    <location>
        <begin position="5"/>
        <end position="108"/>
    </location>
</feature>
<feature type="zinc finger region" description="NOB1" evidence="3">
    <location>
        <begin position="251"/>
        <end position="323"/>
    </location>
</feature>
<feature type="region of interest" description="Disordered" evidence="4">
    <location>
        <begin position="180"/>
        <end position="201"/>
    </location>
</feature>
<feature type="compositionally biased region" description="Acidic residues" evidence="4">
    <location>
        <begin position="180"/>
        <end position="196"/>
    </location>
</feature>
<feature type="binding site" evidence="5 8">
    <location>
        <position position="261"/>
    </location>
    <ligand>
        <name>Zn(2+)</name>
        <dbReference type="ChEBI" id="CHEBI:29105"/>
    </ligand>
</feature>
<feature type="binding site" evidence="5 8">
    <location>
        <position position="264"/>
    </location>
    <ligand>
        <name>Zn(2+)</name>
        <dbReference type="ChEBI" id="CHEBI:29105"/>
    </ligand>
</feature>
<feature type="binding site" evidence="5 8">
    <location>
        <position position="276"/>
    </location>
    <ligand>
        <name>Zn(2+)</name>
        <dbReference type="ChEBI" id="CHEBI:29105"/>
    </ligand>
</feature>
<feature type="binding site" evidence="5 8">
    <location>
        <position position="279"/>
    </location>
    <ligand>
        <name>Zn(2+)</name>
        <dbReference type="ChEBI" id="CHEBI:29105"/>
    </ligand>
</feature>
<feature type="modified residue" description="Phosphoserine" evidence="2">
    <location>
        <position position="192"/>
    </location>
</feature>
<feature type="modified residue" description="Phosphoserine" evidence="2">
    <location>
        <position position="316"/>
    </location>
</feature>
<feature type="modified residue" description="Phosphoserine" evidence="2">
    <location>
        <position position="343"/>
    </location>
</feature>
<feature type="strand" evidence="9">
    <location>
        <begin position="257"/>
        <end position="260"/>
    </location>
</feature>
<feature type="strand" evidence="9">
    <location>
        <begin position="262"/>
        <end position="264"/>
    </location>
</feature>
<feature type="strand" evidence="9">
    <location>
        <begin position="267"/>
        <end position="269"/>
    </location>
</feature>
<feature type="strand" evidence="9">
    <location>
        <begin position="277"/>
        <end position="279"/>
    </location>
</feature>
<feature type="strand" evidence="9">
    <location>
        <begin position="285"/>
        <end position="288"/>
    </location>
</feature>